<name>ATPA2_CHLL3</name>
<gene>
    <name evidence="2" type="primary">atpA2</name>
    <name type="ordered locus">Plut_1985</name>
</gene>
<comment type="function">
    <text evidence="2">Produces ATP from ADP in the presence of a proton gradient across the membrane. The alpha chain is a regulatory subunit.</text>
</comment>
<comment type="catalytic activity">
    <reaction evidence="2">
        <text>ATP + H2O + 4 H(+)(in) = ADP + phosphate + 5 H(+)(out)</text>
        <dbReference type="Rhea" id="RHEA:57720"/>
        <dbReference type="ChEBI" id="CHEBI:15377"/>
        <dbReference type="ChEBI" id="CHEBI:15378"/>
        <dbReference type="ChEBI" id="CHEBI:30616"/>
        <dbReference type="ChEBI" id="CHEBI:43474"/>
        <dbReference type="ChEBI" id="CHEBI:456216"/>
        <dbReference type="EC" id="7.1.2.2"/>
    </reaction>
</comment>
<comment type="subunit">
    <text evidence="1">F-type ATPases have 2 components, CF(1) - the catalytic core - and CF(0) - the membrane proton channel. CF(1) has five subunits: alpha(3), beta(3), gamma(1), delta(1), epsilon(1). CF(0) has four main subunits: a(1), b(1), b'(1) and c(9-12) (By similarity).</text>
</comment>
<comment type="subcellular location">
    <subcellularLocation>
        <location evidence="2">Cell inner membrane</location>
        <topology evidence="2">Peripheral membrane protein</topology>
    </subcellularLocation>
</comment>
<comment type="similarity">
    <text evidence="2">Belongs to the ATPase alpha/beta chains family.</text>
</comment>
<organism>
    <name type="scientific">Chlorobium luteolum (strain DSM 273 / BCRC 81028 / 2530)</name>
    <name type="common">Pelodictyon luteolum</name>
    <dbReference type="NCBI Taxonomy" id="319225"/>
    <lineage>
        <taxon>Bacteria</taxon>
        <taxon>Pseudomonadati</taxon>
        <taxon>Chlorobiota</taxon>
        <taxon>Chlorobiia</taxon>
        <taxon>Chlorobiales</taxon>
        <taxon>Chlorobiaceae</taxon>
        <taxon>Chlorobium/Pelodictyon group</taxon>
        <taxon>Pelodictyon</taxon>
    </lineage>
</organism>
<reference key="1">
    <citation type="submission" date="2005-08" db="EMBL/GenBank/DDBJ databases">
        <title>Complete sequence of Pelodictyon luteolum DSM 273.</title>
        <authorList>
            <consortium name="US DOE Joint Genome Institute"/>
            <person name="Copeland A."/>
            <person name="Lucas S."/>
            <person name="Lapidus A."/>
            <person name="Barry K."/>
            <person name="Detter J.C."/>
            <person name="Glavina T."/>
            <person name="Hammon N."/>
            <person name="Israni S."/>
            <person name="Pitluck S."/>
            <person name="Bryant D."/>
            <person name="Schmutz J."/>
            <person name="Larimer F."/>
            <person name="Land M."/>
            <person name="Kyrpides N."/>
            <person name="Ivanova N."/>
            <person name="Richardson P."/>
        </authorList>
    </citation>
    <scope>NUCLEOTIDE SEQUENCE [LARGE SCALE GENOMIC DNA]</scope>
    <source>
        <strain>DSM 273 / BCRC 81028 / 2530</strain>
    </source>
</reference>
<proteinExistence type="inferred from homology"/>
<evidence type="ECO:0000250" key="1"/>
<evidence type="ECO:0000255" key="2">
    <source>
        <dbReference type="HAMAP-Rule" id="MF_01346"/>
    </source>
</evidence>
<accession>Q3B1F4</accession>
<keyword id="KW-0066">ATP synthesis</keyword>
<keyword id="KW-0067">ATP-binding</keyword>
<keyword id="KW-0997">Cell inner membrane</keyword>
<keyword id="KW-1003">Cell membrane</keyword>
<keyword id="KW-0139">CF(1)</keyword>
<keyword id="KW-0375">Hydrogen ion transport</keyword>
<keyword id="KW-0406">Ion transport</keyword>
<keyword id="KW-0472">Membrane</keyword>
<keyword id="KW-0547">Nucleotide-binding</keyword>
<keyword id="KW-1185">Reference proteome</keyword>
<keyword id="KW-1278">Translocase</keyword>
<keyword id="KW-0813">Transport</keyword>
<feature type="chain" id="PRO_0000238316" description="ATP synthase subunit alpha 2">
    <location>
        <begin position="1"/>
        <end position="526"/>
    </location>
</feature>
<feature type="binding site" evidence="2">
    <location>
        <begin position="171"/>
        <end position="178"/>
    </location>
    <ligand>
        <name>ATP</name>
        <dbReference type="ChEBI" id="CHEBI:30616"/>
    </ligand>
</feature>
<feature type="site" description="Required for activity" evidence="2">
    <location>
        <position position="382"/>
    </location>
</feature>
<sequence>MSTTVRPDEVSSILRKQLAGFESEAEVYDVGTVLQVGDGIARVYGLSKAAAGELLEFPNKVMGMALNLEEDNVGAVLFGDSTEVKEGDTVKRTGILASVPVGEAMLGRVVNPLGVPIDGKGIIDTDIRLPLERRAPGVIYRKSVHEPLQTGLKAIDSMIPIGRGQRELIIGDRQTGKTAVALDTIINQKGKGVYCIYVAIGLKGSTVAQVVNTLEKHGAMEYTTVITATASDPAPLQFIAPFAGAALGEYFRDTGRHALVVYDDLSKQAVAYRQLSLLLRRPPGREAYPGDVFFLHSRLLERAAKITDDIEVAKKMNDLPDALRPMVQGGGSLTALPVIETQAGDVSAYIPTNVISITDGQIFLESNLFNSGQRPAINVGISVSRVGGAAQIKAMKKVAGTLRLDLAQFRELEAFSKFGSDLDKTTKAQLDRGARLVEILKQGQYVPMPVERQVAIIFLGTQGLLDLVAVQHVKKFEEEFLAMLDLKHSDILKSIAETGALEADVAGRLKEAAQKFVTTFNDKVKA</sequence>
<protein>
    <recommendedName>
        <fullName evidence="2">ATP synthase subunit alpha 2</fullName>
        <ecNumber evidence="2">7.1.2.2</ecNumber>
    </recommendedName>
    <alternativeName>
        <fullName evidence="2">ATP synthase F1 sector subunit alpha 2</fullName>
    </alternativeName>
    <alternativeName>
        <fullName evidence="2">F-ATPase subunit alpha 2</fullName>
    </alternativeName>
</protein>
<dbReference type="EC" id="7.1.2.2" evidence="2"/>
<dbReference type="EMBL" id="CP000096">
    <property type="protein sequence ID" value="ABB24827.1"/>
    <property type="molecule type" value="Genomic_DNA"/>
</dbReference>
<dbReference type="RefSeq" id="WP_011358697.1">
    <property type="nucleotide sequence ID" value="NC_007512.1"/>
</dbReference>
<dbReference type="SMR" id="Q3B1F4"/>
<dbReference type="STRING" id="319225.Plut_1985"/>
<dbReference type="KEGG" id="plt:Plut_1985"/>
<dbReference type="eggNOG" id="COG0056">
    <property type="taxonomic scope" value="Bacteria"/>
</dbReference>
<dbReference type="HOGENOM" id="CLU_010091_2_1_10"/>
<dbReference type="OrthoDB" id="9803053at2"/>
<dbReference type="Proteomes" id="UP000002709">
    <property type="component" value="Chromosome"/>
</dbReference>
<dbReference type="GO" id="GO:0005886">
    <property type="term" value="C:plasma membrane"/>
    <property type="evidence" value="ECO:0007669"/>
    <property type="project" value="UniProtKB-SubCell"/>
</dbReference>
<dbReference type="GO" id="GO:0045259">
    <property type="term" value="C:proton-transporting ATP synthase complex"/>
    <property type="evidence" value="ECO:0007669"/>
    <property type="project" value="UniProtKB-KW"/>
</dbReference>
<dbReference type="GO" id="GO:0043531">
    <property type="term" value="F:ADP binding"/>
    <property type="evidence" value="ECO:0007669"/>
    <property type="project" value="TreeGrafter"/>
</dbReference>
<dbReference type="GO" id="GO:0005524">
    <property type="term" value="F:ATP binding"/>
    <property type="evidence" value="ECO:0007669"/>
    <property type="project" value="UniProtKB-UniRule"/>
</dbReference>
<dbReference type="GO" id="GO:0046933">
    <property type="term" value="F:proton-transporting ATP synthase activity, rotational mechanism"/>
    <property type="evidence" value="ECO:0007669"/>
    <property type="project" value="UniProtKB-UniRule"/>
</dbReference>
<dbReference type="CDD" id="cd18113">
    <property type="entry name" value="ATP-synt_F1_alpha_C"/>
    <property type="match status" value="1"/>
</dbReference>
<dbReference type="CDD" id="cd18116">
    <property type="entry name" value="ATP-synt_F1_alpha_N"/>
    <property type="match status" value="1"/>
</dbReference>
<dbReference type="CDD" id="cd01132">
    <property type="entry name" value="F1-ATPase_alpha_CD"/>
    <property type="match status" value="1"/>
</dbReference>
<dbReference type="FunFam" id="1.20.150.20:FF:000001">
    <property type="entry name" value="ATP synthase subunit alpha"/>
    <property type="match status" value="1"/>
</dbReference>
<dbReference type="FunFam" id="2.40.30.20:FF:000001">
    <property type="entry name" value="ATP synthase subunit alpha"/>
    <property type="match status" value="1"/>
</dbReference>
<dbReference type="FunFam" id="3.40.50.300:FF:000002">
    <property type="entry name" value="ATP synthase subunit alpha"/>
    <property type="match status" value="1"/>
</dbReference>
<dbReference type="Gene3D" id="2.40.30.20">
    <property type="match status" value="1"/>
</dbReference>
<dbReference type="Gene3D" id="1.20.150.20">
    <property type="entry name" value="ATP synthase alpha/beta chain, C-terminal domain"/>
    <property type="match status" value="1"/>
</dbReference>
<dbReference type="Gene3D" id="3.40.50.300">
    <property type="entry name" value="P-loop containing nucleotide triphosphate hydrolases"/>
    <property type="match status" value="1"/>
</dbReference>
<dbReference type="HAMAP" id="MF_01346">
    <property type="entry name" value="ATP_synth_alpha_bact"/>
    <property type="match status" value="1"/>
</dbReference>
<dbReference type="InterPro" id="IPR023366">
    <property type="entry name" value="ATP_synth_asu-like_sf"/>
</dbReference>
<dbReference type="InterPro" id="IPR000793">
    <property type="entry name" value="ATP_synth_asu_C"/>
</dbReference>
<dbReference type="InterPro" id="IPR038376">
    <property type="entry name" value="ATP_synth_asu_C_sf"/>
</dbReference>
<dbReference type="InterPro" id="IPR033732">
    <property type="entry name" value="ATP_synth_F1_a_nt-bd_dom"/>
</dbReference>
<dbReference type="InterPro" id="IPR005294">
    <property type="entry name" value="ATP_synth_F1_asu"/>
</dbReference>
<dbReference type="InterPro" id="IPR020003">
    <property type="entry name" value="ATPase_a/bsu_AS"/>
</dbReference>
<dbReference type="InterPro" id="IPR004100">
    <property type="entry name" value="ATPase_F1/V1/A1_a/bsu_N"/>
</dbReference>
<dbReference type="InterPro" id="IPR036121">
    <property type="entry name" value="ATPase_F1/V1/A1_a/bsu_N_sf"/>
</dbReference>
<dbReference type="InterPro" id="IPR000194">
    <property type="entry name" value="ATPase_F1/V1/A1_a/bsu_nucl-bd"/>
</dbReference>
<dbReference type="InterPro" id="IPR027417">
    <property type="entry name" value="P-loop_NTPase"/>
</dbReference>
<dbReference type="NCBIfam" id="TIGR00962">
    <property type="entry name" value="atpA"/>
    <property type="match status" value="1"/>
</dbReference>
<dbReference type="NCBIfam" id="NF009884">
    <property type="entry name" value="PRK13343.1"/>
    <property type="match status" value="1"/>
</dbReference>
<dbReference type="PANTHER" id="PTHR48082">
    <property type="entry name" value="ATP SYNTHASE SUBUNIT ALPHA, MITOCHONDRIAL"/>
    <property type="match status" value="1"/>
</dbReference>
<dbReference type="PANTHER" id="PTHR48082:SF2">
    <property type="entry name" value="ATP SYNTHASE SUBUNIT ALPHA, MITOCHONDRIAL"/>
    <property type="match status" value="1"/>
</dbReference>
<dbReference type="Pfam" id="PF00006">
    <property type="entry name" value="ATP-synt_ab"/>
    <property type="match status" value="1"/>
</dbReference>
<dbReference type="Pfam" id="PF00306">
    <property type="entry name" value="ATP-synt_ab_C"/>
    <property type="match status" value="1"/>
</dbReference>
<dbReference type="Pfam" id="PF02874">
    <property type="entry name" value="ATP-synt_ab_N"/>
    <property type="match status" value="1"/>
</dbReference>
<dbReference type="PIRSF" id="PIRSF039088">
    <property type="entry name" value="F_ATPase_subunit_alpha"/>
    <property type="match status" value="1"/>
</dbReference>
<dbReference type="SUPFAM" id="SSF47917">
    <property type="entry name" value="C-terminal domain of alpha and beta subunits of F1 ATP synthase"/>
    <property type="match status" value="1"/>
</dbReference>
<dbReference type="SUPFAM" id="SSF50615">
    <property type="entry name" value="N-terminal domain of alpha and beta subunits of F1 ATP synthase"/>
    <property type="match status" value="1"/>
</dbReference>
<dbReference type="SUPFAM" id="SSF52540">
    <property type="entry name" value="P-loop containing nucleoside triphosphate hydrolases"/>
    <property type="match status" value="1"/>
</dbReference>
<dbReference type="PROSITE" id="PS00152">
    <property type="entry name" value="ATPASE_ALPHA_BETA"/>
    <property type="match status" value="1"/>
</dbReference>